<dbReference type="EMBL" id="CP000243">
    <property type="protein sequence ID" value="ABE09202.1"/>
    <property type="molecule type" value="Genomic_DNA"/>
</dbReference>
<dbReference type="RefSeq" id="WP_000529945.1">
    <property type="nucleotide sequence ID" value="NZ_CP064825.1"/>
</dbReference>
<dbReference type="SMR" id="Q1R612"/>
<dbReference type="GeneID" id="97603663"/>
<dbReference type="KEGG" id="eci:UTI89_C3765"/>
<dbReference type="HOGENOM" id="CLU_058591_0_2_6"/>
<dbReference type="Proteomes" id="UP000001952">
    <property type="component" value="Chromosome"/>
</dbReference>
<dbReference type="GO" id="GO:0022627">
    <property type="term" value="C:cytosolic small ribosomal subunit"/>
    <property type="evidence" value="ECO:0007669"/>
    <property type="project" value="TreeGrafter"/>
</dbReference>
<dbReference type="GO" id="GO:0003729">
    <property type="term" value="F:mRNA binding"/>
    <property type="evidence" value="ECO:0007669"/>
    <property type="project" value="UniProtKB-UniRule"/>
</dbReference>
<dbReference type="GO" id="GO:0019843">
    <property type="term" value="F:rRNA binding"/>
    <property type="evidence" value="ECO:0007669"/>
    <property type="project" value="UniProtKB-UniRule"/>
</dbReference>
<dbReference type="GO" id="GO:0003735">
    <property type="term" value="F:structural constituent of ribosome"/>
    <property type="evidence" value="ECO:0007669"/>
    <property type="project" value="InterPro"/>
</dbReference>
<dbReference type="GO" id="GO:0006412">
    <property type="term" value="P:translation"/>
    <property type="evidence" value="ECO:0007669"/>
    <property type="project" value="UniProtKB-UniRule"/>
</dbReference>
<dbReference type="CDD" id="cd02412">
    <property type="entry name" value="KH-II_30S_S3"/>
    <property type="match status" value="1"/>
</dbReference>
<dbReference type="FunFam" id="3.30.1140.32:FF:000001">
    <property type="entry name" value="30S ribosomal protein S3"/>
    <property type="match status" value="1"/>
</dbReference>
<dbReference type="FunFam" id="3.30.300.20:FF:000001">
    <property type="entry name" value="30S ribosomal protein S3"/>
    <property type="match status" value="1"/>
</dbReference>
<dbReference type="Gene3D" id="3.30.300.20">
    <property type="match status" value="1"/>
</dbReference>
<dbReference type="Gene3D" id="3.30.1140.32">
    <property type="entry name" value="Ribosomal protein S3, C-terminal domain"/>
    <property type="match status" value="1"/>
</dbReference>
<dbReference type="HAMAP" id="MF_01309_B">
    <property type="entry name" value="Ribosomal_uS3_B"/>
    <property type="match status" value="1"/>
</dbReference>
<dbReference type="InterPro" id="IPR004087">
    <property type="entry name" value="KH_dom"/>
</dbReference>
<dbReference type="InterPro" id="IPR015946">
    <property type="entry name" value="KH_dom-like_a/b"/>
</dbReference>
<dbReference type="InterPro" id="IPR004044">
    <property type="entry name" value="KH_dom_type_2"/>
</dbReference>
<dbReference type="InterPro" id="IPR009019">
    <property type="entry name" value="KH_sf_prok-type"/>
</dbReference>
<dbReference type="InterPro" id="IPR036419">
    <property type="entry name" value="Ribosomal_S3_C_sf"/>
</dbReference>
<dbReference type="InterPro" id="IPR005704">
    <property type="entry name" value="Ribosomal_uS3_bac-typ"/>
</dbReference>
<dbReference type="InterPro" id="IPR001351">
    <property type="entry name" value="Ribosomal_uS3_C"/>
</dbReference>
<dbReference type="InterPro" id="IPR018280">
    <property type="entry name" value="Ribosomal_uS3_CS"/>
</dbReference>
<dbReference type="NCBIfam" id="TIGR01009">
    <property type="entry name" value="rpsC_bact"/>
    <property type="match status" value="1"/>
</dbReference>
<dbReference type="PANTHER" id="PTHR11760">
    <property type="entry name" value="30S/40S RIBOSOMAL PROTEIN S3"/>
    <property type="match status" value="1"/>
</dbReference>
<dbReference type="PANTHER" id="PTHR11760:SF19">
    <property type="entry name" value="SMALL RIBOSOMAL SUBUNIT PROTEIN US3C"/>
    <property type="match status" value="1"/>
</dbReference>
<dbReference type="Pfam" id="PF07650">
    <property type="entry name" value="KH_2"/>
    <property type="match status" value="1"/>
</dbReference>
<dbReference type="Pfam" id="PF00189">
    <property type="entry name" value="Ribosomal_S3_C"/>
    <property type="match status" value="1"/>
</dbReference>
<dbReference type="SMART" id="SM00322">
    <property type="entry name" value="KH"/>
    <property type="match status" value="1"/>
</dbReference>
<dbReference type="SUPFAM" id="SSF54814">
    <property type="entry name" value="Prokaryotic type KH domain (KH-domain type II)"/>
    <property type="match status" value="1"/>
</dbReference>
<dbReference type="SUPFAM" id="SSF54821">
    <property type="entry name" value="Ribosomal protein S3 C-terminal domain"/>
    <property type="match status" value="1"/>
</dbReference>
<dbReference type="PROSITE" id="PS50823">
    <property type="entry name" value="KH_TYPE_2"/>
    <property type="match status" value="1"/>
</dbReference>
<dbReference type="PROSITE" id="PS00548">
    <property type="entry name" value="RIBOSOMAL_S3"/>
    <property type="match status" value="1"/>
</dbReference>
<accession>Q1R612</accession>
<organism>
    <name type="scientific">Escherichia coli (strain UTI89 / UPEC)</name>
    <dbReference type="NCBI Taxonomy" id="364106"/>
    <lineage>
        <taxon>Bacteria</taxon>
        <taxon>Pseudomonadati</taxon>
        <taxon>Pseudomonadota</taxon>
        <taxon>Gammaproteobacteria</taxon>
        <taxon>Enterobacterales</taxon>
        <taxon>Enterobacteriaceae</taxon>
        <taxon>Escherichia</taxon>
    </lineage>
</organism>
<proteinExistence type="inferred from homology"/>
<protein>
    <recommendedName>
        <fullName evidence="1">Small ribosomal subunit protein uS3</fullName>
    </recommendedName>
    <alternativeName>
        <fullName evidence="2">30S ribosomal protein S3</fullName>
    </alternativeName>
</protein>
<keyword id="KW-0687">Ribonucleoprotein</keyword>
<keyword id="KW-0689">Ribosomal protein</keyword>
<keyword id="KW-0694">RNA-binding</keyword>
<keyword id="KW-0699">rRNA-binding</keyword>
<name>RS3_ECOUT</name>
<feature type="chain" id="PRO_0000293786" description="Small ribosomal subunit protein uS3">
    <location>
        <begin position="1"/>
        <end position="233"/>
    </location>
</feature>
<feature type="domain" description="KH type-2" evidence="1">
    <location>
        <begin position="39"/>
        <end position="107"/>
    </location>
</feature>
<evidence type="ECO:0000255" key="1">
    <source>
        <dbReference type="HAMAP-Rule" id="MF_01309"/>
    </source>
</evidence>
<evidence type="ECO:0000305" key="2"/>
<gene>
    <name evidence="1" type="primary">rpsC</name>
    <name type="ordered locus">UTI89_C3765</name>
</gene>
<sequence>MGQKVHPNGIRLGIVKPWNSTWFANTKEFADNLDSDFKVRQYLTKELAKASVSRIVIERPAKSIRVTIHTARPGIVIGKKGEDVEKLRKVVADIAGVPAQINIAEVRKPELDAKLVADSITSQLERRVMFRRAMKRAVQNAMRLGAKGIKVEVSGRLGGAEIARTEWYREGRVPLHTLRADIDYNTSEAHTTYGVIGVKVWIFKGEILGGMAAVEQPEKPAAQPKKQQRKGRK</sequence>
<reference key="1">
    <citation type="journal article" date="2006" name="Proc. Natl. Acad. Sci. U.S.A.">
        <title>Identification of genes subject to positive selection in uropathogenic strains of Escherichia coli: a comparative genomics approach.</title>
        <authorList>
            <person name="Chen S.L."/>
            <person name="Hung C.-S."/>
            <person name="Xu J."/>
            <person name="Reigstad C.S."/>
            <person name="Magrini V."/>
            <person name="Sabo A."/>
            <person name="Blasiar D."/>
            <person name="Bieri T."/>
            <person name="Meyer R.R."/>
            <person name="Ozersky P."/>
            <person name="Armstrong J.R."/>
            <person name="Fulton R.S."/>
            <person name="Latreille J.P."/>
            <person name="Spieth J."/>
            <person name="Hooton T.M."/>
            <person name="Mardis E.R."/>
            <person name="Hultgren S.J."/>
            <person name="Gordon J.I."/>
        </authorList>
    </citation>
    <scope>NUCLEOTIDE SEQUENCE [LARGE SCALE GENOMIC DNA]</scope>
    <source>
        <strain>UTI89 / UPEC</strain>
    </source>
</reference>
<comment type="function">
    <text evidence="1">Binds the lower part of the 30S subunit head. Binds mRNA in the 70S ribosome, positioning it for translation.</text>
</comment>
<comment type="subunit">
    <text evidence="1">Part of the 30S ribosomal subunit. Forms a tight complex with proteins S10 and S14.</text>
</comment>
<comment type="similarity">
    <text evidence="1">Belongs to the universal ribosomal protein uS3 family.</text>
</comment>